<name>RL19_HAEIE</name>
<evidence type="ECO:0000255" key="1">
    <source>
        <dbReference type="HAMAP-Rule" id="MF_00402"/>
    </source>
</evidence>
<evidence type="ECO:0000305" key="2"/>
<keyword id="KW-0687">Ribonucleoprotein</keyword>
<keyword id="KW-0689">Ribosomal protein</keyword>
<comment type="function">
    <text evidence="1">This protein is located at the 30S-50S ribosomal subunit interface and may play a role in the structure and function of the aminoacyl-tRNA binding site.</text>
</comment>
<comment type="similarity">
    <text evidence="1">Belongs to the bacterial ribosomal protein bL19 family.</text>
</comment>
<reference key="1">
    <citation type="journal article" date="2007" name="Genome Biol.">
        <title>Characterization and modeling of the Haemophilus influenzae core and supragenomes based on the complete genomic sequences of Rd and 12 clinical nontypeable strains.</title>
        <authorList>
            <person name="Hogg J.S."/>
            <person name="Hu F.Z."/>
            <person name="Janto B."/>
            <person name="Boissy R."/>
            <person name="Hayes J."/>
            <person name="Keefe R."/>
            <person name="Post J.C."/>
            <person name="Ehrlich G.D."/>
        </authorList>
    </citation>
    <scope>NUCLEOTIDE SEQUENCE [LARGE SCALE GENOMIC DNA]</scope>
    <source>
        <strain>PittEE</strain>
    </source>
</reference>
<accession>A5UAV4</accession>
<dbReference type="EMBL" id="CP000671">
    <property type="protein sequence ID" value="ABQ97905.1"/>
    <property type="molecule type" value="Genomic_DNA"/>
</dbReference>
<dbReference type="SMR" id="A5UAV4"/>
<dbReference type="KEGG" id="hip:CGSHiEE_02240"/>
<dbReference type="HOGENOM" id="CLU_103507_2_2_6"/>
<dbReference type="GO" id="GO:0022625">
    <property type="term" value="C:cytosolic large ribosomal subunit"/>
    <property type="evidence" value="ECO:0007669"/>
    <property type="project" value="TreeGrafter"/>
</dbReference>
<dbReference type="GO" id="GO:0003735">
    <property type="term" value="F:structural constituent of ribosome"/>
    <property type="evidence" value="ECO:0007669"/>
    <property type="project" value="InterPro"/>
</dbReference>
<dbReference type="GO" id="GO:0006412">
    <property type="term" value="P:translation"/>
    <property type="evidence" value="ECO:0007669"/>
    <property type="project" value="UniProtKB-UniRule"/>
</dbReference>
<dbReference type="FunFam" id="2.30.30.790:FF:000001">
    <property type="entry name" value="50S ribosomal protein L19"/>
    <property type="match status" value="1"/>
</dbReference>
<dbReference type="Gene3D" id="2.30.30.790">
    <property type="match status" value="1"/>
</dbReference>
<dbReference type="HAMAP" id="MF_00402">
    <property type="entry name" value="Ribosomal_bL19"/>
    <property type="match status" value="1"/>
</dbReference>
<dbReference type="InterPro" id="IPR001857">
    <property type="entry name" value="Ribosomal_bL19"/>
</dbReference>
<dbReference type="InterPro" id="IPR018257">
    <property type="entry name" value="Ribosomal_bL19_CS"/>
</dbReference>
<dbReference type="InterPro" id="IPR038657">
    <property type="entry name" value="Ribosomal_bL19_sf"/>
</dbReference>
<dbReference type="InterPro" id="IPR008991">
    <property type="entry name" value="Translation_prot_SH3-like_sf"/>
</dbReference>
<dbReference type="NCBIfam" id="TIGR01024">
    <property type="entry name" value="rplS_bact"/>
    <property type="match status" value="1"/>
</dbReference>
<dbReference type="PANTHER" id="PTHR15680:SF9">
    <property type="entry name" value="LARGE RIBOSOMAL SUBUNIT PROTEIN BL19M"/>
    <property type="match status" value="1"/>
</dbReference>
<dbReference type="PANTHER" id="PTHR15680">
    <property type="entry name" value="RIBOSOMAL PROTEIN L19"/>
    <property type="match status" value="1"/>
</dbReference>
<dbReference type="Pfam" id="PF01245">
    <property type="entry name" value="Ribosomal_L19"/>
    <property type="match status" value="1"/>
</dbReference>
<dbReference type="PIRSF" id="PIRSF002191">
    <property type="entry name" value="Ribosomal_L19"/>
    <property type="match status" value="1"/>
</dbReference>
<dbReference type="PRINTS" id="PR00061">
    <property type="entry name" value="RIBOSOMALL19"/>
</dbReference>
<dbReference type="SUPFAM" id="SSF50104">
    <property type="entry name" value="Translation proteins SH3-like domain"/>
    <property type="match status" value="1"/>
</dbReference>
<dbReference type="PROSITE" id="PS01015">
    <property type="entry name" value="RIBOSOMAL_L19"/>
    <property type="match status" value="1"/>
</dbReference>
<proteinExistence type="inferred from homology"/>
<organism>
    <name type="scientific">Haemophilus influenzae (strain PittEE)</name>
    <dbReference type="NCBI Taxonomy" id="374930"/>
    <lineage>
        <taxon>Bacteria</taxon>
        <taxon>Pseudomonadati</taxon>
        <taxon>Pseudomonadota</taxon>
        <taxon>Gammaproteobacteria</taxon>
        <taxon>Pasteurellales</taxon>
        <taxon>Pasteurellaceae</taxon>
        <taxon>Haemophilus</taxon>
    </lineage>
</organism>
<protein>
    <recommendedName>
        <fullName evidence="1">Large ribosomal subunit protein bL19</fullName>
    </recommendedName>
    <alternativeName>
        <fullName evidence="2">50S ribosomal protein L19</fullName>
    </alternativeName>
</protein>
<sequence length="116" mass="13070">MSNIIKQLEQEQLKQNVPSFRPGDTLEVKVWVVEGSKRRLQAFEGVVIAIRNRGLHSAFTLRKVSNGVGVERVFQTHSPAVDSIAVKRKGAVRKAKLYYLRERSGKSARIKERLGA</sequence>
<gene>
    <name evidence="1" type="primary">rplS</name>
    <name type="ordered locus">CGSHiEE_02240</name>
</gene>
<feature type="chain" id="PRO_1000049683" description="Large ribosomal subunit protein bL19">
    <location>
        <begin position="1"/>
        <end position="116"/>
    </location>
</feature>